<proteinExistence type="evidence at protein level"/>
<accession>Q15735</accession>
<accession>B3KS54</accession>
<accession>Q32M61</accession>
<accession>Q6ZTH6</accession>
<accession>Q8N902</accession>
<accession>Q9UDT9</accession>
<feature type="chain" id="PRO_0000209738" description="Phosphatidylinositol 4,5-bisphosphate 5-phosphatase A">
    <location>
        <begin position="1"/>
        <end position="1006"/>
    </location>
</feature>
<feature type="region of interest" description="Disordered" evidence="5">
    <location>
        <begin position="1"/>
        <end position="416"/>
    </location>
</feature>
<feature type="region of interest" description="Catalytic" evidence="4">
    <location>
        <begin position="425"/>
        <end position="728"/>
    </location>
</feature>
<feature type="region of interest" description="Required for ruffle localization" evidence="1">
    <location>
        <begin position="729"/>
        <end position="840"/>
    </location>
</feature>
<feature type="region of interest" description="Disordered" evidence="5">
    <location>
        <begin position="844"/>
        <end position="1006"/>
    </location>
</feature>
<feature type="short sequence motif" description="RSXSXX motif 1">
    <location>
        <begin position="102"/>
        <end position="107"/>
    </location>
</feature>
<feature type="short sequence motif" description="SH3-binding" evidence="4">
    <location>
        <begin position="345"/>
        <end position="350"/>
    </location>
</feature>
<feature type="short sequence motif" description="RSXSXX motif 2">
    <location>
        <begin position="350"/>
        <end position="355"/>
    </location>
</feature>
<feature type="short sequence motif" description="RSXSXX motif 3">
    <location>
        <begin position="874"/>
        <end position="879"/>
    </location>
</feature>
<feature type="short sequence motif" description="RSXSXX motif 4">
    <location>
        <begin position="885"/>
        <end position="890"/>
    </location>
</feature>
<feature type="short sequence motif" description="RSXSXX motif 5">
    <location>
        <begin position="911"/>
        <end position="916"/>
    </location>
</feature>
<feature type="compositionally biased region" description="Polar residues" evidence="5">
    <location>
        <begin position="27"/>
        <end position="41"/>
    </location>
</feature>
<feature type="compositionally biased region" description="Polar residues" evidence="5">
    <location>
        <begin position="94"/>
        <end position="112"/>
    </location>
</feature>
<feature type="compositionally biased region" description="Low complexity" evidence="5">
    <location>
        <begin position="180"/>
        <end position="193"/>
    </location>
</feature>
<feature type="compositionally biased region" description="Pro residues" evidence="5">
    <location>
        <begin position="196"/>
        <end position="209"/>
    </location>
</feature>
<feature type="compositionally biased region" description="Low complexity" evidence="5">
    <location>
        <begin position="210"/>
        <end position="234"/>
    </location>
</feature>
<feature type="compositionally biased region" description="Polar residues" evidence="5">
    <location>
        <begin position="256"/>
        <end position="273"/>
    </location>
</feature>
<feature type="compositionally biased region" description="Pro residues" evidence="5">
    <location>
        <begin position="337"/>
        <end position="347"/>
    </location>
</feature>
<feature type="compositionally biased region" description="Low complexity" evidence="5">
    <location>
        <begin position="348"/>
        <end position="360"/>
    </location>
</feature>
<feature type="compositionally biased region" description="Low complexity" evidence="5">
    <location>
        <begin position="398"/>
        <end position="409"/>
    </location>
</feature>
<feature type="compositionally biased region" description="Low complexity" evidence="5">
    <location>
        <begin position="844"/>
        <end position="858"/>
    </location>
</feature>
<feature type="compositionally biased region" description="Low complexity" evidence="5">
    <location>
        <begin position="927"/>
        <end position="946"/>
    </location>
</feature>
<feature type="modified residue" description="Asymmetric dimethylarginine; alternate" evidence="2">
    <location>
        <position position="56"/>
    </location>
</feature>
<feature type="modified residue" description="Omega-N-methylarginine; alternate" evidence="2">
    <location>
        <position position="56"/>
    </location>
</feature>
<feature type="modified residue" description="Omega-N-methylarginine" evidence="2">
    <location>
        <position position="65"/>
    </location>
</feature>
<feature type="modified residue" description="Asymmetric dimethylarginine" evidence="2">
    <location>
        <position position="76"/>
    </location>
</feature>
<feature type="modified residue" description="Asymmetric dimethylarginine; alternate" evidence="2">
    <location>
        <position position="83"/>
    </location>
</feature>
<feature type="modified residue" description="Omega-N-methylarginine; alternate" evidence="2">
    <location>
        <position position="83"/>
    </location>
</feature>
<feature type="modified residue" description="Phosphoserine" evidence="2">
    <location>
        <position position="291"/>
    </location>
</feature>
<feature type="modified residue" description="Phosphoserine" evidence="2">
    <location>
        <position position="324"/>
    </location>
</feature>
<feature type="modified residue" description="Phosphoserine" evidence="9">
    <location>
        <position position="903"/>
    </location>
</feature>
<feature type="modified residue" description="Phosphoserine" evidence="9">
    <location>
        <position position="990"/>
    </location>
</feature>
<feature type="splice variant" id="VSP_007296" description="In isoform 2." evidence="6 7">
    <location>
        <begin position="1"/>
        <end position="367"/>
    </location>
</feature>
<feature type="splice variant" id="VSP_021017" description="In isoform 3." evidence="6">
    <location>
        <begin position="56"/>
        <end position="423"/>
    </location>
</feature>
<feature type="sequence variant" id="VAR_028107" description="In dbSNP:rs12485025.">
    <original>S</original>
    <variation>I</variation>
    <location>
        <position position="333"/>
    </location>
</feature>
<feature type="sequence conflict" description="In Ref. 5." evidence="8" ref="5">
    <original>SYD</original>
    <variation>ARG</variation>
    <location>
        <begin position="610"/>
        <end position="612"/>
    </location>
</feature>
<feature type="sequence conflict" description="In Ref. 1; BAC86611." evidence="8" ref="1">
    <original>V</original>
    <variation>A</variation>
    <location>
        <position position="662"/>
    </location>
</feature>
<feature type="sequence conflict" description="In Ref. 4; AAI09289." evidence="8" ref="4">
    <original>W</original>
    <variation>R</variation>
    <location>
        <position position="791"/>
    </location>
</feature>
<name>PI5PA_HUMAN</name>
<gene>
    <name type="primary">INPP5J</name>
    <name type="synonym">PIB5PA</name>
    <name type="synonym">PIPP</name>
</gene>
<dbReference type="EC" id="3.1.3.36" evidence="3"/>
<dbReference type="EC" id="3.1.3.56" evidence="3"/>
<dbReference type="EMBL" id="AK092859">
    <property type="protein sequence ID" value="BAG52616.1"/>
    <property type="molecule type" value="mRNA"/>
</dbReference>
<dbReference type="EMBL" id="AK095944">
    <property type="protein sequence ID" value="BAC04657.1"/>
    <property type="molecule type" value="mRNA"/>
</dbReference>
<dbReference type="EMBL" id="AK126610">
    <property type="protein sequence ID" value="BAC86611.1"/>
    <property type="molecule type" value="mRNA"/>
</dbReference>
<dbReference type="EMBL" id="AC005005">
    <property type="protein sequence ID" value="AAD15618.1"/>
    <property type="status" value="ALT_SEQ"/>
    <property type="molecule type" value="Genomic_DNA"/>
</dbReference>
<dbReference type="EMBL" id="CH471095">
    <property type="protein sequence ID" value="EAW59936.1"/>
    <property type="molecule type" value="Genomic_DNA"/>
</dbReference>
<dbReference type="EMBL" id="BC109288">
    <property type="protein sequence ID" value="AAI09289.1"/>
    <property type="molecule type" value="mRNA"/>
</dbReference>
<dbReference type="EMBL" id="U45975">
    <property type="protein sequence ID" value="AAB03216.1"/>
    <property type="molecule type" value="mRNA"/>
</dbReference>
<dbReference type="CCDS" id="CCDS46687.1">
    <molecule id="Q15735-3"/>
</dbReference>
<dbReference type="CCDS" id="CCDS63453.1">
    <molecule id="Q15735-1"/>
</dbReference>
<dbReference type="CCDS" id="CCDS63455.1">
    <molecule id="Q15735-2"/>
</dbReference>
<dbReference type="RefSeq" id="NP_001002837.1">
    <molecule id="Q15735-3"/>
    <property type="nucleotide sequence ID" value="NM_001002837.3"/>
</dbReference>
<dbReference type="RefSeq" id="NP_001271214.1">
    <molecule id="Q15735-1"/>
    <property type="nucleotide sequence ID" value="NM_001284285.2"/>
</dbReference>
<dbReference type="RefSeq" id="NP_001271217.1">
    <molecule id="Q15735-2"/>
    <property type="nucleotide sequence ID" value="NM_001284288.2"/>
</dbReference>
<dbReference type="RefSeq" id="NP_001271218.1">
    <molecule id="Q15735-2"/>
    <property type="nucleotide sequence ID" value="NM_001284289.2"/>
</dbReference>
<dbReference type="RefSeq" id="NP_001410401.1">
    <molecule id="Q15735-1"/>
    <property type="nucleotide sequence ID" value="NM_001423472.1"/>
</dbReference>
<dbReference type="RefSeq" id="NP_001410402.1">
    <molecule id="Q15735-1"/>
    <property type="nucleotide sequence ID" value="NM_001423473.1"/>
</dbReference>
<dbReference type="RefSeq" id="NP_001410407.1">
    <molecule id="Q15735-2"/>
    <property type="nucleotide sequence ID" value="NM_001423478.1"/>
</dbReference>
<dbReference type="RefSeq" id="XP_016884260.1">
    <property type="nucleotide sequence ID" value="XM_017028771.1"/>
</dbReference>
<dbReference type="SMR" id="Q15735"/>
<dbReference type="BioGRID" id="118015">
    <property type="interactions" value="19"/>
</dbReference>
<dbReference type="FunCoup" id="Q15735">
    <property type="interactions" value="280"/>
</dbReference>
<dbReference type="IntAct" id="Q15735">
    <property type="interactions" value="18"/>
</dbReference>
<dbReference type="STRING" id="9606.ENSP00000333262"/>
<dbReference type="DEPOD" id="INPP5J"/>
<dbReference type="GlyCosmos" id="Q15735">
    <property type="glycosylation" value="2 sites, 1 glycan"/>
</dbReference>
<dbReference type="GlyGen" id="Q15735">
    <property type="glycosylation" value="5 sites, 2 N-linked glycans (2 sites), 1 O-linked glycan (2 sites)"/>
</dbReference>
<dbReference type="iPTMnet" id="Q15735"/>
<dbReference type="PhosphoSitePlus" id="Q15735"/>
<dbReference type="BioMuta" id="INPP5J"/>
<dbReference type="DMDM" id="116242713"/>
<dbReference type="jPOST" id="Q15735"/>
<dbReference type="MassIVE" id="Q15735"/>
<dbReference type="PaxDb" id="9606-ENSP00000333262"/>
<dbReference type="PeptideAtlas" id="Q15735"/>
<dbReference type="ProteomicsDB" id="60724">
    <molecule id="Q15735-1"/>
</dbReference>
<dbReference type="ProteomicsDB" id="60725">
    <molecule id="Q15735-2"/>
</dbReference>
<dbReference type="ProteomicsDB" id="60726">
    <molecule id="Q15735-3"/>
</dbReference>
<dbReference type="Antibodypedia" id="5745">
    <property type="antibodies" value="199 antibodies from 29 providers"/>
</dbReference>
<dbReference type="DNASU" id="27124"/>
<dbReference type="Ensembl" id="ENST00000331075.10">
    <molecule id="Q15735-1"/>
    <property type="protein sequence ID" value="ENSP00000333262.5"/>
    <property type="gene ID" value="ENSG00000185133.15"/>
</dbReference>
<dbReference type="Ensembl" id="ENST00000404390.7">
    <molecule id="Q15735-3"/>
    <property type="protein sequence ID" value="ENSP00000384534.3"/>
    <property type="gene ID" value="ENSG00000185133.15"/>
</dbReference>
<dbReference type="GeneID" id="27124"/>
<dbReference type="KEGG" id="hsa:27124"/>
<dbReference type="MANE-Select" id="ENST00000331075.10">
    <property type="protein sequence ID" value="ENSP00000333262.5"/>
    <property type="RefSeq nucleotide sequence ID" value="NM_001284285.2"/>
    <property type="RefSeq protein sequence ID" value="NP_001271214.1"/>
</dbReference>
<dbReference type="UCSC" id="uc003ajs.5">
    <molecule id="Q15735-1"/>
    <property type="organism name" value="human"/>
</dbReference>
<dbReference type="AGR" id="HGNC:8956"/>
<dbReference type="CTD" id="27124"/>
<dbReference type="DisGeNET" id="27124"/>
<dbReference type="GeneCards" id="INPP5J"/>
<dbReference type="HGNC" id="HGNC:8956">
    <property type="gene designation" value="INPP5J"/>
</dbReference>
<dbReference type="HPA" id="ENSG00000185133">
    <property type="expression patterns" value="Tissue enhanced (parathyroid gland, thyroid gland)"/>
</dbReference>
<dbReference type="MIM" id="606481">
    <property type="type" value="gene"/>
</dbReference>
<dbReference type="neXtProt" id="NX_Q15735"/>
<dbReference type="OpenTargets" id="ENSG00000185133"/>
<dbReference type="PharmGKB" id="PA164720918"/>
<dbReference type="VEuPathDB" id="HostDB:ENSG00000185133"/>
<dbReference type="eggNOG" id="KOG0565">
    <property type="taxonomic scope" value="Eukaryota"/>
</dbReference>
<dbReference type="GeneTree" id="ENSGT00940000156855"/>
<dbReference type="InParanoid" id="Q15735"/>
<dbReference type="OMA" id="NMAKSSW"/>
<dbReference type="OrthoDB" id="62798at2759"/>
<dbReference type="PAN-GO" id="Q15735">
    <property type="GO annotations" value="8 GO annotations based on evolutionary models"/>
</dbReference>
<dbReference type="PhylomeDB" id="Q15735"/>
<dbReference type="TreeFam" id="TF317034"/>
<dbReference type="BioCyc" id="MetaCyc:HS11950-MONOMER"/>
<dbReference type="BRENDA" id="3.1.3.56">
    <property type="organism ID" value="2681"/>
</dbReference>
<dbReference type="PathwayCommons" id="Q15735"/>
<dbReference type="Reactome" id="R-HSA-1660499">
    <property type="pathway name" value="Synthesis of PIPs at the plasma membrane"/>
</dbReference>
<dbReference type="Reactome" id="R-HSA-1855183">
    <property type="pathway name" value="Synthesis of IP2, IP, and Ins in the cytosol"/>
</dbReference>
<dbReference type="Reactome" id="R-HSA-1855204">
    <property type="pathway name" value="Synthesis of IP3 and IP4 in the cytosol"/>
</dbReference>
<dbReference type="SignaLink" id="Q15735"/>
<dbReference type="BioGRID-ORCS" id="27124">
    <property type="hits" value="10 hits in 1181 CRISPR screens"/>
</dbReference>
<dbReference type="ChiTaRS" id="INPP5J">
    <property type="organism name" value="human"/>
</dbReference>
<dbReference type="GeneWiki" id="PIB5PA"/>
<dbReference type="GenomeRNAi" id="27124"/>
<dbReference type="Pharos" id="Q15735">
    <property type="development level" value="Tbio"/>
</dbReference>
<dbReference type="PRO" id="PR:Q15735"/>
<dbReference type="Proteomes" id="UP000005640">
    <property type="component" value="Chromosome 22"/>
</dbReference>
<dbReference type="RNAct" id="Q15735">
    <property type="molecule type" value="protein"/>
</dbReference>
<dbReference type="Bgee" id="ENSG00000185133">
    <property type="expression patterns" value="Expressed in right lobe of thyroid gland and 107 other cell types or tissues"/>
</dbReference>
<dbReference type="ExpressionAtlas" id="Q15735">
    <property type="expression patterns" value="baseline and differential"/>
</dbReference>
<dbReference type="GO" id="GO:0005737">
    <property type="term" value="C:cytoplasm"/>
    <property type="evidence" value="ECO:0000314"/>
    <property type="project" value="MGI"/>
</dbReference>
<dbReference type="GO" id="GO:0005829">
    <property type="term" value="C:cytosol"/>
    <property type="evidence" value="ECO:0000304"/>
    <property type="project" value="Reactome"/>
</dbReference>
<dbReference type="GO" id="GO:0043198">
    <property type="term" value="C:dendritic shaft"/>
    <property type="evidence" value="ECO:0007669"/>
    <property type="project" value="Ensembl"/>
</dbReference>
<dbReference type="GO" id="GO:0030426">
    <property type="term" value="C:growth cone"/>
    <property type="evidence" value="ECO:0007669"/>
    <property type="project" value="Ensembl"/>
</dbReference>
<dbReference type="GO" id="GO:0043005">
    <property type="term" value="C:neuron projection"/>
    <property type="evidence" value="ECO:0000318"/>
    <property type="project" value="GO_Central"/>
</dbReference>
<dbReference type="GO" id="GO:0005886">
    <property type="term" value="C:plasma membrane"/>
    <property type="evidence" value="ECO:0000318"/>
    <property type="project" value="GO_Central"/>
</dbReference>
<dbReference type="GO" id="GO:0001726">
    <property type="term" value="C:ruffle"/>
    <property type="evidence" value="ECO:0000314"/>
    <property type="project" value="MGI"/>
</dbReference>
<dbReference type="GO" id="GO:0046030">
    <property type="term" value="F:inositol trisphosphate phosphatase activity"/>
    <property type="evidence" value="ECO:0000318"/>
    <property type="project" value="GO_Central"/>
</dbReference>
<dbReference type="GO" id="GO:0052659">
    <property type="term" value="F:inositol-1,3,4,5-tetrakisphosphate 5-phosphatase activity"/>
    <property type="evidence" value="ECO:0007669"/>
    <property type="project" value="RHEA"/>
</dbReference>
<dbReference type="GO" id="GO:0052658">
    <property type="term" value="F:inositol-1,4,5-trisphosphate 5-phosphatase activity"/>
    <property type="evidence" value="ECO:0000304"/>
    <property type="project" value="Reactome"/>
</dbReference>
<dbReference type="GO" id="GO:0034485">
    <property type="term" value="F:phosphatidylinositol-3,4,5-trisphosphate 5-phosphatase activity"/>
    <property type="evidence" value="ECO:0000318"/>
    <property type="project" value="GO_Central"/>
</dbReference>
<dbReference type="GO" id="GO:0004439">
    <property type="term" value="F:phosphatidylinositol-4,5-bisphosphate 5-phosphatase activity"/>
    <property type="evidence" value="ECO:0000318"/>
    <property type="project" value="GO_Central"/>
</dbReference>
<dbReference type="GO" id="GO:0017124">
    <property type="term" value="F:SH3 domain binding"/>
    <property type="evidence" value="ECO:0007669"/>
    <property type="project" value="UniProtKB-KW"/>
</dbReference>
<dbReference type="GO" id="GO:0043647">
    <property type="term" value="P:inositol phosphate metabolic process"/>
    <property type="evidence" value="ECO:0000304"/>
    <property type="project" value="Reactome"/>
</dbReference>
<dbReference type="GO" id="GO:0031115">
    <property type="term" value="P:negative regulation of microtubule polymerization"/>
    <property type="evidence" value="ECO:0000318"/>
    <property type="project" value="GO_Central"/>
</dbReference>
<dbReference type="GO" id="GO:0010977">
    <property type="term" value="P:negative regulation of neuron projection development"/>
    <property type="evidence" value="ECO:0007669"/>
    <property type="project" value="Ensembl"/>
</dbReference>
<dbReference type="GO" id="GO:0006661">
    <property type="term" value="P:phosphatidylinositol biosynthetic process"/>
    <property type="evidence" value="ECO:0000304"/>
    <property type="project" value="Reactome"/>
</dbReference>
<dbReference type="GO" id="GO:0046856">
    <property type="term" value="P:phosphatidylinositol dephosphorylation"/>
    <property type="evidence" value="ECO:0007669"/>
    <property type="project" value="InterPro"/>
</dbReference>
<dbReference type="CDD" id="cd09094">
    <property type="entry name" value="INPP5c_INPP5J-like"/>
    <property type="match status" value="1"/>
</dbReference>
<dbReference type="FunFam" id="2.60.40.2840:FF:000003">
    <property type="entry name" value="Phosphatidylinositol 4,5-bisphosphate 5-phosphatase A"/>
    <property type="match status" value="1"/>
</dbReference>
<dbReference type="FunFam" id="3.60.10.10:FF:000013">
    <property type="entry name" value="Phosphatidylinositol 4,5-bisphosphate 5-phosphatase A"/>
    <property type="match status" value="1"/>
</dbReference>
<dbReference type="Gene3D" id="2.60.40.2840">
    <property type="match status" value="1"/>
</dbReference>
<dbReference type="Gene3D" id="3.60.10.10">
    <property type="entry name" value="Endonuclease/exonuclease/phosphatase"/>
    <property type="match status" value="1"/>
</dbReference>
<dbReference type="InterPro" id="IPR036691">
    <property type="entry name" value="Endo/exonu/phosph_ase_sf"/>
</dbReference>
<dbReference type="InterPro" id="IPR046985">
    <property type="entry name" value="IP5"/>
</dbReference>
<dbReference type="InterPro" id="IPR000300">
    <property type="entry name" value="IPPc"/>
</dbReference>
<dbReference type="InterPro" id="IPR041611">
    <property type="entry name" value="SKICH"/>
</dbReference>
<dbReference type="PANTHER" id="PTHR11200">
    <property type="entry name" value="INOSITOL 5-PHOSPHATASE"/>
    <property type="match status" value="1"/>
</dbReference>
<dbReference type="PANTHER" id="PTHR11200:SF127">
    <property type="entry name" value="PHOSPHATIDYLINOSITOL 4,5-BISPHOSPHATE 5-PHOSPHATASE A"/>
    <property type="match status" value="1"/>
</dbReference>
<dbReference type="Pfam" id="PF22669">
    <property type="entry name" value="Exo_endo_phos2"/>
    <property type="match status" value="1"/>
</dbReference>
<dbReference type="Pfam" id="PF17751">
    <property type="entry name" value="SKICH"/>
    <property type="match status" value="1"/>
</dbReference>
<dbReference type="SMART" id="SM00128">
    <property type="entry name" value="IPPc"/>
    <property type="match status" value="1"/>
</dbReference>
<dbReference type="SUPFAM" id="SSF56219">
    <property type="entry name" value="DNase I-like"/>
    <property type="match status" value="1"/>
</dbReference>
<comment type="function">
    <text evidence="3">Inositol 5-phosphatase, which converts inositol 1,4,5-trisphosphate to inositol 1,4-bisphosphate. Also converts phosphatidylinositol 4,5-bisphosphate to phosphatidylinositol 4-phosphate and inositol 1,3,4,5-tetrakisphosphate to inositol 1,3,4-trisphosphate in vitro. May be involved in modulation of the function of inositol and phosphatidylinositol polyphosphate-binding proteins that are present at membranes ruffles.</text>
</comment>
<comment type="catalytic activity">
    <reaction evidence="3">
        <text>1D-myo-inositol 1,4,5-trisphosphate + H2O = 1D-myo-inositol 1,4-bisphosphate + phosphate</text>
        <dbReference type="Rhea" id="RHEA:19797"/>
        <dbReference type="ChEBI" id="CHEBI:15377"/>
        <dbReference type="ChEBI" id="CHEBI:43474"/>
        <dbReference type="ChEBI" id="CHEBI:58282"/>
        <dbReference type="ChEBI" id="CHEBI:203600"/>
        <dbReference type="EC" id="3.1.3.56"/>
    </reaction>
    <physiologicalReaction direction="left-to-right" evidence="3">
        <dbReference type="Rhea" id="RHEA:19798"/>
    </physiologicalReaction>
</comment>
<comment type="catalytic activity">
    <reaction evidence="3">
        <text>1D-myo-inositol 1,3,4,5-tetrakisphosphate + H2O = 1D-myo-inositol 1,3,4-trisphosphate + phosphate</text>
        <dbReference type="Rhea" id="RHEA:11392"/>
        <dbReference type="ChEBI" id="CHEBI:15377"/>
        <dbReference type="ChEBI" id="CHEBI:43474"/>
        <dbReference type="ChEBI" id="CHEBI:57895"/>
        <dbReference type="ChEBI" id="CHEBI:58414"/>
        <dbReference type="EC" id="3.1.3.56"/>
    </reaction>
    <physiologicalReaction direction="left-to-right" evidence="3">
        <dbReference type="Rhea" id="RHEA:11393"/>
    </physiologicalReaction>
</comment>
<comment type="catalytic activity">
    <reaction evidence="3">
        <text>a 1,2-diacyl-sn-glycero-3-phospho-(1D-myo-inositol-4,5-bisphosphate) + H2O = a 1,2-diacyl-sn-glycero-3-phospho-(1D-myo-inositol 4-phosphate) + phosphate</text>
        <dbReference type="Rhea" id="RHEA:22764"/>
        <dbReference type="ChEBI" id="CHEBI:15377"/>
        <dbReference type="ChEBI" id="CHEBI:43474"/>
        <dbReference type="ChEBI" id="CHEBI:58178"/>
        <dbReference type="ChEBI" id="CHEBI:58456"/>
        <dbReference type="EC" id="3.1.3.36"/>
    </reaction>
    <physiologicalReaction direction="left-to-right" evidence="3">
        <dbReference type="Rhea" id="RHEA:22765"/>
    </physiologicalReaction>
</comment>
<comment type="interaction">
    <interactant intactId="EBI-10236940">
        <id>Q15735</id>
    </interactant>
    <interactant intactId="EBI-396137">
        <id>Q9UJX2</id>
        <label>CDC23</label>
    </interactant>
    <organismsDiffer>false</organismsDiffer>
    <experiments>3</experiments>
</comment>
<comment type="interaction">
    <interactant intactId="EBI-10236940">
        <id>Q15735</id>
    </interactant>
    <interactant intactId="EBI-739624">
        <id>Q8NHQ1</id>
        <label>CEP70</label>
    </interactant>
    <organismsDiffer>false</organismsDiffer>
    <experiments>3</experiments>
</comment>
<comment type="interaction">
    <interactant intactId="EBI-10236940">
        <id>Q15735</id>
    </interactant>
    <interactant intactId="EBI-3952284">
        <id>Q96EY1-2</id>
        <label>DNAJA3</label>
    </interactant>
    <organismsDiffer>false</organismsDiffer>
    <experiments>3</experiments>
</comment>
<comment type="interaction">
    <interactant intactId="EBI-10236940">
        <id>Q15735</id>
    </interactant>
    <interactant intactId="EBI-2349927">
        <id>Q5JST6</id>
        <label>EFHC2</label>
    </interactant>
    <organismsDiffer>false</organismsDiffer>
    <experiments>3</experiments>
</comment>
<comment type="interaction">
    <interactant intactId="EBI-10236940">
        <id>Q15735</id>
    </interactant>
    <interactant intactId="EBI-375576">
        <id>Q12929</id>
        <label>EPS8</label>
    </interactant>
    <organismsDiffer>false</organismsDiffer>
    <experiments>3</experiments>
</comment>
<comment type="interaction">
    <interactant intactId="EBI-10236940">
        <id>Q15735</id>
    </interactant>
    <interactant intactId="EBI-740459">
        <id>P51116</id>
        <label>FXR2</label>
    </interactant>
    <organismsDiffer>false</organismsDiffer>
    <experiments>3</experiments>
</comment>
<comment type="interaction">
    <interactant intactId="EBI-10236940">
        <id>Q15735</id>
    </interactant>
    <interactant intactId="EBI-618309">
        <id>Q08379</id>
        <label>GOLGA2</label>
    </interactant>
    <organismsDiffer>false</organismsDiffer>
    <experiments>6</experiments>
</comment>
<comment type="interaction">
    <interactant intactId="EBI-10236940">
        <id>Q15735</id>
    </interactant>
    <interactant intactId="EBI-7116203">
        <id>O75031</id>
        <label>HSF2BP</label>
    </interactant>
    <organismsDiffer>false</organismsDiffer>
    <experiments>3</experiments>
</comment>
<comment type="interaction">
    <interactant intactId="EBI-10236940">
        <id>Q15735</id>
    </interactant>
    <interactant intactId="EBI-2864512">
        <id>P50221</id>
        <label>MEOX1</label>
    </interactant>
    <organismsDiffer>false</organismsDiffer>
    <experiments>3</experiments>
</comment>
<comment type="interaction">
    <interactant intactId="EBI-10236940">
        <id>Q15735</id>
    </interactant>
    <interactant intactId="EBI-16439278">
        <id>Q6FHY5</id>
        <label>MEOX2</label>
    </interactant>
    <organismsDiffer>false</organismsDiffer>
    <experiments>3</experiments>
</comment>
<comment type="interaction">
    <interactant intactId="EBI-10236940">
        <id>Q15735</id>
    </interactant>
    <interactant intactId="EBI-448369">
        <id>Q96FA3</id>
        <label>PELI1</label>
    </interactant>
    <organismsDiffer>false</organismsDiffer>
    <experiments>3</experiments>
</comment>
<comment type="interaction">
    <interactant intactId="EBI-10236940">
        <id>Q15735</id>
    </interactant>
    <interactant intactId="EBI-79165">
        <id>Q9NRD5</id>
        <label>PICK1</label>
    </interactant>
    <organismsDiffer>false</organismsDiffer>
    <experiments>3</experiments>
</comment>
<comment type="interaction">
    <interactant intactId="EBI-10236940">
        <id>Q15735</id>
    </interactant>
    <interactant intactId="EBI-2805516">
        <id>P31321</id>
        <label>PRKAR1B</label>
    </interactant>
    <organismsDiffer>false</organismsDiffer>
    <experiments>3</experiments>
</comment>
<comment type="interaction">
    <interactant intactId="EBI-10236940">
        <id>Q15735</id>
    </interactant>
    <interactant intactId="EBI-355546">
        <id>P61289</id>
        <label>PSME3</label>
    </interactant>
    <organismsDiffer>false</organismsDiffer>
    <experiments>3</experiments>
</comment>
<comment type="interaction">
    <interactant intactId="EBI-10236940">
        <id>Q15735</id>
    </interactant>
    <interactant intactId="EBI-726876">
        <id>Q6NUQ1</id>
        <label>RINT1</label>
    </interactant>
    <organismsDiffer>false</organismsDiffer>
    <experiments>3</experiments>
</comment>
<comment type="interaction">
    <interactant intactId="EBI-10236940">
        <id>Q15735</id>
    </interactant>
    <interactant intactId="EBI-11741437">
        <id>Q08117-2</id>
        <label>TLE5</label>
    </interactant>
    <organismsDiffer>false</organismsDiffer>
    <experiments>3</experiments>
</comment>
<comment type="interaction">
    <interactant intactId="EBI-10236940">
        <id>Q15735</id>
    </interactant>
    <interactant intactId="EBI-719493">
        <id>P14373</id>
        <label>TRIM27</label>
    </interactant>
    <organismsDiffer>false</organismsDiffer>
    <experiments>3</experiments>
</comment>
<comment type="interaction">
    <interactant intactId="EBI-10236940">
        <id>Q15735</id>
    </interactant>
    <interactant intactId="EBI-2130429">
        <id>Q9BYV2</id>
        <label>TRIM54</label>
    </interactant>
    <organismsDiffer>false</organismsDiffer>
    <experiments>6</experiments>
</comment>
<comment type="subcellular location">
    <subcellularLocation>
        <location evidence="1">Cytoplasm</location>
    </subcellularLocation>
    <text evidence="1">Predominantly localized to membrane ruffles.</text>
</comment>
<comment type="alternative products">
    <event type="alternative splicing"/>
    <isoform>
        <id>Q15735-1</id>
        <name>1</name>
        <sequence type="displayed"/>
    </isoform>
    <isoform>
        <id>Q15735-2</id>
        <name>2</name>
        <sequence type="described" ref="VSP_007296"/>
    </isoform>
    <isoform>
        <id>Q15735-3</id>
        <name>3</name>
        <sequence type="described" ref="VSP_021017"/>
    </isoform>
</comment>
<comment type="domain">
    <text>The 5 Arg-Ser-Xaa-Ser-Xaa-Xaa (RSXSXX) motifs may constitute binding sites for the 14-3-3 protein.</text>
</comment>
<comment type="similarity">
    <text evidence="8">Belongs to the inositol 1,4,5-trisphosphate 5-phosphatase type II family.</text>
</comment>
<comment type="sequence caution" evidence="8">
    <conflict type="erroneous gene model prediction">
        <sequence resource="EMBL-CDS" id="AAD15618"/>
    </conflict>
</comment>
<keyword id="KW-0025">Alternative splicing</keyword>
<keyword id="KW-0963">Cytoplasm</keyword>
<keyword id="KW-0378">Hydrolase</keyword>
<keyword id="KW-0488">Methylation</keyword>
<keyword id="KW-0597">Phosphoprotein</keyword>
<keyword id="KW-1267">Proteomics identification</keyword>
<keyword id="KW-1185">Reference proteome</keyword>
<keyword id="KW-0677">Repeat</keyword>
<keyword id="KW-0729">SH3-binding</keyword>
<protein>
    <recommendedName>
        <fullName>Phosphatidylinositol 4,5-bisphosphate 5-phosphatase A</fullName>
        <ecNumber evidence="3">3.1.3.36</ecNumber>
    </recommendedName>
    <alternativeName>
        <fullName>Inositol polyphosphate 5-phosphatase J</fullName>
    </alternativeName>
    <alternativeName>
        <fullName>Phosphatidylinositol 1,3,4,5-tetrakisphosphate 5-phosphatase</fullName>
        <ecNumber evidence="3">3.1.3.56</ecNumber>
    </alternativeName>
    <alternativeName>
        <fullName>Phosphatidylinositol 1,4,5-trisphosphate 5-phosphatase</fullName>
        <ecNumber evidence="3">3.1.3.56</ecNumber>
    </alternativeName>
</protein>
<organism>
    <name type="scientific">Homo sapiens</name>
    <name type="common">Human</name>
    <dbReference type="NCBI Taxonomy" id="9606"/>
    <lineage>
        <taxon>Eukaryota</taxon>
        <taxon>Metazoa</taxon>
        <taxon>Chordata</taxon>
        <taxon>Craniata</taxon>
        <taxon>Vertebrata</taxon>
        <taxon>Euteleostomi</taxon>
        <taxon>Mammalia</taxon>
        <taxon>Eutheria</taxon>
        <taxon>Euarchontoglires</taxon>
        <taxon>Primates</taxon>
        <taxon>Haplorrhini</taxon>
        <taxon>Catarrhini</taxon>
        <taxon>Hominidae</taxon>
        <taxon>Homo</taxon>
    </lineage>
</organism>
<sequence length="1006" mass="107197">MEGQSSRGSRRPGTRAGLGSLPMPQGVAQTGAPSKVDSSFQLPAKKNAALGPSEPRLALAPVGPRAAMSASSEGPRLALASPRPILAPLCTPEGQKTATAHRSSSLAPTSVGQLVMSASAGPKPPPATTGSVLAPTSLGLVMPASAGPRSPPVTLGPNLAPTSRDQKQEPPASVGPKPTLAASGLSLALASEEQPPELPSTPSPVPSPVLSPTQEQALAPASTASGAASVGQTSARKRDAPAPRPLPASEGHLQPPAQTSGPTGSPPCIQTSPDPRLSPSFRARPEALHSSPEDPVLPRPPQTLPLDVGQGPSEPGTHSPGLLSPTFRPGAPSGQTVPPPLPKPPRSPSRSPSHSPNRSPCVPPAPDMALPRLGTQSTGPGRCLSPNLQAQEAPAPVTTSSSTSTLSSSPWSAQPTWKSDPGFRITVVTWNVGTAMPPDDVTSLLHLGGGDDSDGADMIAIGLQEVNSMLNKRLKDALFTDQWSELFMDALGPFNFVLVSSVRMQGVILLLFAKYYHLPFLRDVQTDCTRTGLGGYWGNKGGVSVRLAAFGHMLCFLNCHLPAHMDKAEQRKDNFQTILSLQQFQGPGAQGILDHDLVFWFGDLNFRIESYDLHFVKFAIDSDQLHQLWEKDQLNMAKNTWPILKGFQEGPLNFAPTFKFDVGTNKYDTSAKKRKPAWTDRILWKVKAPGGGPSPSGRKSHRLQVTQHSYRSHMEYTVSDHKPVAAQFLLQFAFRDDMPLVRLEVADEWVRPEQAVVRYRMETVFARSSWDWIGLYRVGFRHCKDYVAYVWAKHEDVDGNTYQVTFSEESLPKGHGDFILGYYSHNHSILIGITEPFQISLPSSELASSSTDSSGTSSEGEDDSTLELLAPKSRSPSPGKSKRHRSRSPGLARFPGLALRPSSRERRGASRSPSPQSRRLSRVAPDRSSNGSSRGSSEEGPSGLPGPWAFPPAVPRSLGLLPALRLETVDPGGGGSWGPDREALAPNSLSPSPQGHRGLEEGGLGP</sequence>
<reference key="1">
    <citation type="journal article" date="2004" name="Nat. Genet.">
        <title>Complete sequencing and characterization of 21,243 full-length human cDNAs.</title>
        <authorList>
            <person name="Ota T."/>
            <person name="Suzuki Y."/>
            <person name="Nishikawa T."/>
            <person name="Otsuki T."/>
            <person name="Sugiyama T."/>
            <person name="Irie R."/>
            <person name="Wakamatsu A."/>
            <person name="Hayashi K."/>
            <person name="Sato H."/>
            <person name="Nagai K."/>
            <person name="Kimura K."/>
            <person name="Makita H."/>
            <person name="Sekine M."/>
            <person name="Obayashi M."/>
            <person name="Nishi T."/>
            <person name="Shibahara T."/>
            <person name="Tanaka T."/>
            <person name="Ishii S."/>
            <person name="Yamamoto J."/>
            <person name="Saito K."/>
            <person name="Kawai Y."/>
            <person name="Isono Y."/>
            <person name="Nakamura Y."/>
            <person name="Nagahari K."/>
            <person name="Murakami K."/>
            <person name="Yasuda T."/>
            <person name="Iwayanagi T."/>
            <person name="Wagatsuma M."/>
            <person name="Shiratori A."/>
            <person name="Sudo H."/>
            <person name="Hosoiri T."/>
            <person name="Kaku Y."/>
            <person name="Kodaira H."/>
            <person name="Kondo H."/>
            <person name="Sugawara M."/>
            <person name="Takahashi M."/>
            <person name="Kanda K."/>
            <person name="Yokoi T."/>
            <person name="Furuya T."/>
            <person name="Kikkawa E."/>
            <person name="Omura Y."/>
            <person name="Abe K."/>
            <person name="Kamihara K."/>
            <person name="Katsuta N."/>
            <person name="Sato K."/>
            <person name="Tanikawa M."/>
            <person name="Yamazaki M."/>
            <person name="Ninomiya K."/>
            <person name="Ishibashi T."/>
            <person name="Yamashita H."/>
            <person name="Murakawa K."/>
            <person name="Fujimori K."/>
            <person name="Tanai H."/>
            <person name="Kimata M."/>
            <person name="Watanabe M."/>
            <person name="Hiraoka S."/>
            <person name="Chiba Y."/>
            <person name="Ishida S."/>
            <person name="Ono Y."/>
            <person name="Takiguchi S."/>
            <person name="Watanabe S."/>
            <person name="Yosida M."/>
            <person name="Hotuta T."/>
            <person name="Kusano J."/>
            <person name="Kanehori K."/>
            <person name="Takahashi-Fujii A."/>
            <person name="Hara H."/>
            <person name="Tanase T.-O."/>
            <person name="Nomura Y."/>
            <person name="Togiya S."/>
            <person name="Komai F."/>
            <person name="Hara R."/>
            <person name="Takeuchi K."/>
            <person name="Arita M."/>
            <person name="Imose N."/>
            <person name="Musashino K."/>
            <person name="Yuuki H."/>
            <person name="Oshima A."/>
            <person name="Sasaki N."/>
            <person name="Aotsuka S."/>
            <person name="Yoshikawa Y."/>
            <person name="Matsunawa H."/>
            <person name="Ichihara T."/>
            <person name="Shiohata N."/>
            <person name="Sano S."/>
            <person name="Moriya S."/>
            <person name="Momiyama H."/>
            <person name="Satoh N."/>
            <person name="Takami S."/>
            <person name="Terashima Y."/>
            <person name="Suzuki O."/>
            <person name="Nakagawa S."/>
            <person name="Senoh A."/>
            <person name="Mizoguchi H."/>
            <person name="Goto Y."/>
            <person name="Shimizu F."/>
            <person name="Wakebe H."/>
            <person name="Hishigaki H."/>
            <person name="Watanabe T."/>
            <person name="Sugiyama A."/>
            <person name="Takemoto M."/>
            <person name="Kawakami B."/>
            <person name="Yamazaki M."/>
            <person name="Watanabe K."/>
            <person name="Kumagai A."/>
            <person name="Itakura S."/>
            <person name="Fukuzumi Y."/>
            <person name="Fujimori Y."/>
            <person name="Komiyama M."/>
            <person name="Tashiro H."/>
            <person name="Tanigami A."/>
            <person name="Fujiwara T."/>
            <person name="Ono T."/>
            <person name="Yamada K."/>
            <person name="Fujii Y."/>
            <person name="Ozaki K."/>
            <person name="Hirao M."/>
            <person name="Ohmori Y."/>
            <person name="Kawabata A."/>
            <person name="Hikiji T."/>
            <person name="Kobatake N."/>
            <person name="Inagaki H."/>
            <person name="Ikema Y."/>
            <person name="Okamoto S."/>
            <person name="Okitani R."/>
            <person name="Kawakami T."/>
            <person name="Noguchi S."/>
            <person name="Itoh T."/>
            <person name="Shigeta K."/>
            <person name="Senba T."/>
            <person name="Matsumura K."/>
            <person name="Nakajima Y."/>
            <person name="Mizuno T."/>
            <person name="Morinaga M."/>
            <person name="Sasaki M."/>
            <person name="Togashi T."/>
            <person name="Oyama M."/>
            <person name="Hata H."/>
            <person name="Watanabe M."/>
            <person name="Komatsu T."/>
            <person name="Mizushima-Sugano J."/>
            <person name="Satoh T."/>
            <person name="Shirai Y."/>
            <person name="Takahashi Y."/>
            <person name="Nakagawa K."/>
            <person name="Okumura K."/>
            <person name="Nagase T."/>
            <person name="Nomura N."/>
            <person name="Kikuchi H."/>
            <person name="Masuho Y."/>
            <person name="Yamashita R."/>
            <person name="Nakai K."/>
            <person name="Yada T."/>
            <person name="Nakamura Y."/>
            <person name="Ohara O."/>
            <person name="Isogai T."/>
            <person name="Sugano S."/>
        </authorList>
    </citation>
    <scope>NUCLEOTIDE SEQUENCE [LARGE SCALE MRNA] (ISOFORMS 2 AND 3)</scope>
    <source>
        <tissue>Cerebellum</tissue>
        <tissue>Heart</tissue>
        <tissue>Spleen</tissue>
    </source>
</reference>
<reference key="2">
    <citation type="journal article" date="1999" name="Nature">
        <title>The DNA sequence of human chromosome 22.</title>
        <authorList>
            <person name="Dunham I."/>
            <person name="Hunt A.R."/>
            <person name="Collins J.E."/>
            <person name="Bruskiewich R."/>
            <person name="Beare D.M."/>
            <person name="Clamp M."/>
            <person name="Smink L.J."/>
            <person name="Ainscough R."/>
            <person name="Almeida J.P."/>
            <person name="Babbage A.K."/>
            <person name="Bagguley C."/>
            <person name="Bailey J."/>
            <person name="Barlow K.F."/>
            <person name="Bates K.N."/>
            <person name="Beasley O.P."/>
            <person name="Bird C.P."/>
            <person name="Blakey S.E."/>
            <person name="Bridgeman A.M."/>
            <person name="Buck D."/>
            <person name="Burgess J."/>
            <person name="Burrill W.D."/>
            <person name="Burton J."/>
            <person name="Carder C."/>
            <person name="Carter N.P."/>
            <person name="Chen Y."/>
            <person name="Clark G."/>
            <person name="Clegg S.M."/>
            <person name="Cobley V.E."/>
            <person name="Cole C.G."/>
            <person name="Collier R.E."/>
            <person name="Connor R."/>
            <person name="Conroy D."/>
            <person name="Corby N.R."/>
            <person name="Coville G.J."/>
            <person name="Cox A.V."/>
            <person name="Davis J."/>
            <person name="Dawson E."/>
            <person name="Dhami P.D."/>
            <person name="Dockree C."/>
            <person name="Dodsworth S.J."/>
            <person name="Durbin R.M."/>
            <person name="Ellington A.G."/>
            <person name="Evans K.L."/>
            <person name="Fey J.M."/>
            <person name="Fleming K."/>
            <person name="French L."/>
            <person name="Garner A.A."/>
            <person name="Gilbert J.G.R."/>
            <person name="Goward M.E."/>
            <person name="Grafham D.V."/>
            <person name="Griffiths M.N.D."/>
            <person name="Hall C."/>
            <person name="Hall R.E."/>
            <person name="Hall-Tamlyn G."/>
            <person name="Heathcott R.W."/>
            <person name="Ho S."/>
            <person name="Holmes S."/>
            <person name="Hunt S.E."/>
            <person name="Jones M.C."/>
            <person name="Kershaw J."/>
            <person name="Kimberley A.M."/>
            <person name="King A."/>
            <person name="Laird G.K."/>
            <person name="Langford C.F."/>
            <person name="Leversha M.A."/>
            <person name="Lloyd C."/>
            <person name="Lloyd D.M."/>
            <person name="Martyn I.D."/>
            <person name="Mashreghi-Mohammadi M."/>
            <person name="Matthews L.H."/>
            <person name="Mccann O.T."/>
            <person name="Mcclay J."/>
            <person name="Mclaren S."/>
            <person name="McMurray A.A."/>
            <person name="Milne S.A."/>
            <person name="Mortimore B.J."/>
            <person name="Odell C.N."/>
            <person name="Pavitt R."/>
            <person name="Pearce A.V."/>
            <person name="Pearson D."/>
            <person name="Phillimore B.J.C.T."/>
            <person name="Phillips S.H."/>
            <person name="Plumb R.W."/>
            <person name="Ramsay H."/>
            <person name="Ramsey Y."/>
            <person name="Rogers L."/>
            <person name="Ross M.T."/>
            <person name="Scott C.E."/>
            <person name="Sehra H.K."/>
            <person name="Skuce C.D."/>
            <person name="Smalley S."/>
            <person name="Smith M.L."/>
            <person name="Soderlund C."/>
            <person name="Spragon L."/>
            <person name="Steward C.A."/>
            <person name="Sulston J.E."/>
            <person name="Swann R.M."/>
            <person name="Vaudin M."/>
            <person name="Wall M."/>
            <person name="Wallis J.M."/>
            <person name="Whiteley M.N."/>
            <person name="Willey D.L."/>
            <person name="Williams L."/>
            <person name="Williams S.A."/>
            <person name="Williamson H."/>
            <person name="Wilmer T.E."/>
            <person name="Wilming L."/>
            <person name="Wright C.L."/>
            <person name="Hubbard T."/>
            <person name="Bentley D.R."/>
            <person name="Beck S."/>
            <person name="Rogers J."/>
            <person name="Shimizu N."/>
            <person name="Minoshima S."/>
            <person name="Kawasaki K."/>
            <person name="Sasaki T."/>
            <person name="Asakawa S."/>
            <person name="Kudoh J."/>
            <person name="Shintani A."/>
            <person name="Shibuya K."/>
            <person name="Yoshizaki Y."/>
            <person name="Aoki N."/>
            <person name="Mitsuyama S."/>
            <person name="Roe B.A."/>
            <person name="Chen F."/>
            <person name="Chu L."/>
            <person name="Crabtree J."/>
            <person name="Deschamps S."/>
            <person name="Do A."/>
            <person name="Do T."/>
            <person name="Dorman A."/>
            <person name="Fang F."/>
            <person name="Fu Y."/>
            <person name="Hu P."/>
            <person name="Hua A."/>
            <person name="Kenton S."/>
            <person name="Lai H."/>
            <person name="Lao H.I."/>
            <person name="Lewis J."/>
            <person name="Lewis S."/>
            <person name="Lin S.-P."/>
            <person name="Loh P."/>
            <person name="Malaj E."/>
            <person name="Nguyen T."/>
            <person name="Pan H."/>
            <person name="Phan S."/>
            <person name="Qi S."/>
            <person name="Qian Y."/>
            <person name="Ray L."/>
            <person name="Ren Q."/>
            <person name="Shaull S."/>
            <person name="Sloan D."/>
            <person name="Song L."/>
            <person name="Wang Q."/>
            <person name="Wang Y."/>
            <person name="Wang Z."/>
            <person name="White J."/>
            <person name="Willingham D."/>
            <person name="Wu H."/>
            <person name="Yao Z."/>
            <person name="Zhan M."/>
            <person name="Zhang G."/>
            <person name="Chissoe S."/>
            <person name="Murray J."/>
            <person name="Miller N."/>
            <person name="Minx P."/>
            <person name="Fulton R."/>
            <person name="Johnson D."/>
            <person name="Bemis G."/>
            <person name="Bentley D."/>
            <person name="Bradshaw H."/>
            <person name="Bourne S."/>
            <person name="Cordes M."/>
            <person name="Du Z."/>
            <person name="Fulton L."/>
            <person name="Goela D."/>
            <person name="Graves T."/>
            <person name="Hawkins J."/>
            <person name="Hinds K."/>
            <person name="Kemp K."/>
            <person name="Latreille P."/>
            <person name="Layman D."/>
            <person name="Ozersky P."/>
            <person name="Rohlfing T."/>
            <person name="Scheet P."/>
            <person name="Walker C."/>
            <person name="Wamsley A."/>
            <person name="Wohldmann P."/>
            <person name="Pepin K."/>
            <person name="Nelson J."/>
            <person name="Korf I."/>
            <person name="Bedell J.A."/>
            <person name="Hillier L.W."/>
            <person name="Mardis E."/>
            <person name="Waterston R."/>
            <person name="Wilson R."/>
            <person name="Emanuel B.S."/>
            <person name="Shaikh T."/>
            <person name="Kurahashi H."/>
            <person name="Saitta S."/>
            <person name="Budarf M.L."/>
            <person name="McDermid H.E."/>
            <person name="Johnson A."/>
            <person name="Wong A.C.C."/>
            <person name="Morrow B.E."/>
            <person name="Edelmann L."/>
            <person name="Kim U.J."/>
            <person name="Shizuya H."/>
            <person name="Simon M.I."/>
            <person name="Dumanski J.P."/>
            <person name="Peyrard M."/>
            <person name="Kedra D."/>
            <person name="Seroussi E."/>
            <person name="Fransson I."/>
            <person name="Tapia I."/>
            <person name="Bruder C.E."/>
            <person name="O'Brien K.P."/>
            <person name="Wilkinson P."/>
            <person name="Bodenteich A."/>
            <person name="Hartman K."/>
            <person name="Hu X."/>
            <person name="Khan A.S."/>
            <person name="Lane L."/>
            <person name="Tilahun Y."/>
            <person name="Wright H."/>
        </authorList>
    </citation>
    <scope>NUCLEOTIDE SEQUENCE [LARGE SCALE GENOMIC DNA] (ISOFORM 1)</scope>
</reference>
<reference key="3">
    <citation type="submission" date="2005-07" db="EMBL/GenBank/DDBJ databases">
        <authorList>
            <person name="Mural R.J."/>
            <person name="Istrail S."/>
            <person name="Sutton G.G."/>
            <person name="Florea L."/>
            <person name="Halpern A.L."/>
            <person name="Mobarry C.M."/>
            <person name="Lippert R."/>
            <person name="Walenz B."/>
            <person name="Shatkay H."/>
            <person name="Dew I."/>
            <person name="Miller J.R."/>
            <person name="Flanigan M.J."/>
            <person name="Edwards N.J."/>
            <person name="Bolanos R."/>
            <person name="Fasulo D."/>
            <person name="Halldorsson B.V."/>
            <person name="Hannenhalli S."/>
            <person name="Turner R."/>
            <person name="Yooseph S."/>
            <person name="Lu F."/>
            <person name="Nusskern D.R."/>
            <person name="Shue B.C."/>
            <person name="Zheng X.H."/>
            <person name="Zhong F."/>
            <person name="Delcher A.L."/>
            <person name="Huson D.H."/>
            <person name="Kravitz S.A."/>
            <person name="Mouchard L."/>
            <person name="Reinert K."/>
            <person name="Remington K.A."/>
            <person name="Clark A.G."/>
            <person name="Waterman M.S."/>
            <person name="Eichler E.E."/>
            <person name="Adams M.D."/>
            <person name="Hunkapiller M.W."/>
            <person name="Myers E.W."/>
            <person name="Venter J.C."/>
        </authorList>
    </citation>
    <scope>NUCLEOTIDE SEQUENCE [LARGE SCALE GENOMIC DNA]</scope>
</reference>
<reference key="4">
    <citation type="journal article" date="2004" name="Genome Res.">
        <title>The status, quality, and expansion of the NIH full-length cDNA project: the Mammalian Gene Collection (MGC).</title>
        <authorList>
            <consortium name="The MGC Project Team"/>
        </authorList>
    </citation>
    <scope>NUCLEOTIDE SEQUENCE [LARGE SCALE MRNA] (ISOFORM 2)</scope>
</reference>
<reference key="5">
    <citation type="submission" date="1996-01" db="EMBL/GenBank/DDBJ databases">
        <authorList>
            <person name="Nussbaum R.L."/>
        </authorList>
    </citation>
    <scope>NUCLEOTIDE SEQUENCE [MRNA] OF 610-1006</scope>
    <source>
        <tissue>Brain</tissue>
    </source>
</reference>
<reference key="6">
    <citation type="journal article" date="2013" name="J. Proteome Res.">
        <title>Toward a comprehensive characterization of a human cancer cell phosphoproteome.</title>
        <authorList>
            <person name="Zhou H."/>
            <person name="Di Palma S."/>
            <person name="Preisinger C."/>
            <person name="Peng M."/>
            <person name="Polat A.N."/>
            <person name="Heck A.J."/>
            <person name="Mohammed S."/>
        </authorList>
    </citation>
    <scope>PHOSPHORYLATION [LARGE SCALE ANALYSIS] AT SER-903 AND SER-990</scope>
    <scope>IDENTIFICATION BY MASS SPECTROMETRY [LARGE SCALE ANALYSIS]</scope>
    <source>
        <tissue>Cervix carcinoma</tissue>
        <tissue>Erythroleukemia</tissue>
    </source>
</reference>
<evidence type="ECO:0000250" key="1"/>
<evidence type="ECO:0000250" key="2">
    <source>
        <dbReference type="UniProtKB" id="P59644"/>
    </source>
</evidence>
<evidence type="ECO:0000250" key="3">
    <source>
        <dbReference type="UniProtKB" id="Q9JMC1"/>
    </source>
</evidence>
<evidence type="ECO:0000255" key="4"/>
<evidence type="ECO:0000256" key="5">
    <source>
        <dbReference type="SAM" id="MobiDB-lite"/>
    </source>
</evidence>
<evidence type="ECO:0000303" key="6">
    <source>
    </source>
</evidence>
<evidence type="ECO:0000303" key="7">
    <source>
    </source>
</evidence>
<evidence type="ECO:0000305" key="8"/>
<evidence type="ECO:0007744" key="9">
    <source>
    </source>
</evidence>